<dbReference type="EC" id="2.7.1.2" evidence="1"/>
<dbReference type="EMBL" id="AM260522">
    <property type="protein sequence ID" value="CAJ99270.1"/>
    <property type="molecule type" value="Genomic_DNA"/>
</dbReference>
<dbReference type="RefSeq" id="WP_011577384.1">
    <property type="nucleotide sequence ID" value="NC_008229.1"/>
</dbReference>
<dbReference type="SMR" id="Q17YK6"/>
<dbReference type="STRING" id="382638.Hac_0439"/>
<dbReference type="GeneID" id="31757944"/>
<dbReference type="KEGG" id="hac:Hac_0439"/>
<dbReference type="eggNOG" id="COG0837">
    <property type="taxonomic scope" value="Bacteria"/>
</dbReference>
<dbReference type="HOGENOM" id="CLU_042582_1_0_7"/>
<dbReference type="OrthoDB" id="257751at2"/>
<dbReference type="BioCyc" id="HACI382638:HAC_RS02000-MONOMER"/>
<dbReference type="Proteomes" id="UP000000775">
    <property type="component" value="Chromosome"/>
</dbReference>
<dbReference type="GO" id="GO:0005829">
    <property type="term" value="C:cytosol"/>
    <property type="evidence" value="ECO:0007669"/>
    <property type="project" value="TreeGrafter"/>
</dbReference>
<dbReference type="GO" id="GO:0005524">
    <property type="term" value="F:ATP binding"/>
    <property type="evidence" value="ECO:0007669"/>
    <property type="project" value="UniProtKB-UniRule"/>
</dbReference>
<dbReference type="GO" id="GO:0005536">
    <property type="term" value="F:D-glucose binding"/>
    <property type="evidence" value="ECO:0007669"/>
    <property type="project" value="InterPro"/>
</dbReference>
<dbReference type="GO" id="GO:0004340">
    <property type="term" value="F:glucokinase activity"/>
    <property type="evidence" value="ECO:0007669"/>
    <property type="project" value="UniProtKB-UniRule"/>
</dbReference>
<dbReference type="GO" id="GO:0006096">
    <property type="term" value="P:glycolytic process"/>
    <property type="evidence" value="ECO:0007669"/>
    <property type="project" value="UniProtKB-UniRule"/>
</dbReference>
<dbReference type="CDD" id="cd24008">
    <property type="entry name" value="ASKHA_NBD_GLK"/>
    <property type="match status" value="1"/>
</dbReference>
<dbReference type="FunFam" id="3.40.367.20:FF:000002">
    <property type="entry name" value="Glucokinase"/>
    <property type="match status" value="1"/>
</dbReference>
<dbReference type="Gene3D" id="3.30.420.40">
    <property type="match status" value="1"/>
</dbReference>
<dbReference type="Gene3D" id="3.40.367.20">
    <property type="match status" value="1"/>
</dbReference>
<dbReference type="HAMAP" id="MF_00524">
    <property type="entry name" value="Glucokinase"/>
    <property type="match status" value="1"/>
</dbReference>
<dbReference type="InterPro" id="IPR043129">
    <property type="entry name" value="ATPase_NBD"/>
</dbReference>
<dbReference type="InterPro" id="IPR050201">
    <property type="entry name" value="Bacterial_glucokinase"/>
</dbReference>
<dbReference type="InterPro" id="IPR003836">
    <property type="entry name" value="Glucokinase"/>
</dbReference>
<dbReference type="NCBIfam" id="TIGR00749">
    <property type="entry name" value="glk"/>
    <property type="match status" value="1"/>
</dbReference>
<dbReference type="NCBIfam" id="NF001416">
    <property type="entry name" value="PRK00292.1-3"/>
    <property type="match status" value="1"/>
</dbReference>
<dbReference type="PANTHER" id="PTHR47690">
    <property type="entry name" value="GLUCOKINASE"/>
    <property type="match status" value="1"/>
</dbReference>
<dbReference type="PANTHER" id="PTHR47690:SF1">
    <property type="entry name" value="GLUCOKINASE"/>
    <property type="match status" value="1"/>
</dbReference>
<dbReference type="Pfam" id="PF02685">
    <property type="entry name" value="Glucokinase"/>
    <property type="match status" value="1"/>
</dbReference>
<dbReference type="SUPFAM" id="SSF53067">
    <property type="entry name" value="Actin-like ATPase domain"/>
    <property type="match status" value="1"/>
</dbReference>
<sequence>MPKTETYPRLLADIGGTNARFGLEVASRQIECIEVLRCEDFESLSDAVRFYLSKHQESLKLCPIYGSFAVATPIMGDFVQMTNNHWTFSIETTRQCLGLERLLVVNDFVAQAFAISTMQENDLAQVGGIKCEINAPKAVLGPGTGLGVSTLIQNSDGSLKVLPGEGGHVSFAPFDDLEILVWQYARSKFNHVSAERFLSGSGLVLIYEALSKRKSMEKVAKLSKAELTPQIISERALNGDYPLCRLTLDTFCSMLGTLAADVALTLGARGGVYLCGGIIPRFIDYFKTSPFRARFETKGRMGAFLASIPVHVVLKKTPGLDGVGIALENYLLHDKI</sequence>
<gene>
    <name evidence="1" type="primary">glk</name>
    <name type="ordered locus">Hac_0439</name>
</gene>
<feature type="chain" id="PRO_1000050969" description="Glucokinase">
    <location>
        <begin position="1"/>
        <end position="336"/>
    </location>
</feature>
<feature type="binding site" evidence="1">
    <location>
        <begin position="12"/>
        <end position="17"/>
    </location>
    <ligand>
        <name>ATP</name>
        <dbReference type="ChEBI" id="CHEBI:30616"/>
    </ligand>
</feature>
<comment type="catalytic activity">
    <reaction evidence="1">
        <text>D-glucose + ATP = D-glucose 6-phosphate + ADP + H(+)</text>
        <dbReference type="Rhea" id="RHEA:17825"/>
        <dbReference type="ChEBI" id="CHEBI:4167"/>
        <dbReference type="ChEBI" id="CHEBI:15378"/>
        <dbReference type="ChEBI" id="CHEBI:30616"/>
        <dbReference type="ChEBI" id="CHEBI:61548"/>
        <dbReference type="ChEBI" id="CHEBI:456216"/>
        <dbReference type="EC" id="2.7.1.2"/>
    </reaction>
</comment>
<comment type="subcellular location">
    <subcellularLocation>
        <location evidence="1">Cytoplasm</location>
    </subcellularLocation>
</comment>
<comment type="similarity">
    <text evidence="1">Belongs to the bacterial glucokinase family.</text>
</comment>
<name>GLK_HELAH</name>
<protein>
    <recommendedName>
        <fullName evidence="1">Glucokinase</fullName>
        <ecNumber evidence="1">2.7.1.2</ecNumber>
    </recommendedName>
    <alternativeName>
        <fullName evidence="1">Glucose kinase</fullName>
    </alternativeName>
</protein>
<accession>Q17YK6</accession>
<organism>
    <name type="scientific">Helicobacter acinonychis (strain Sheeba)</name>
    <dbReference type="NCBI Taxonomy" id="382638"/>
    <lineage>
        <taxon>Bacteria</taxon>
        <taxon>Pseudomonadati</taxon>
        <taxon>Campylobacterota</taxon>
        <taxon>Epsilonproteobacteria</taxon>
        <taxon>Campylobacterales</taxon>
        <taxon>Helicobacteraceae</taxon>
        <taxon>Helicobacter</taxon>
    </lineage>
</organism>
<reference key="1">
    <citation type="journal article" date="2006" name="PLoS Genet.">
        <title>Who ate whom? Adaptive Helicobacter genomic changes that accompanied a host jump from early humans to large felines.</title>
        <authorList>
            <person name="Eppinger M."/>
            <person name="Baar C."/>
            <person name="Linz B."/>
            <person name="Raddatz G."/>
            <person name="Lanz C."/>
            <person name="Keller H."/>
            <person name="Morelli G."/>
            <person name="Gressmann H."/>
            <person name="Achtman M."/>
            <person name="Schuster S.C."/>
        </authorList>
    </citation>
    <scope>NUCLEOTIDE SEQUENCE [LARGE SCALE GENOMIC DNA]</scope>
    <source>
        <strain>Sheeba</strain>
    </source>
</reference>
<evidence type="ECO:0000255" key="1">
    <source>
        <dbReference type="HAMAP-Rule" id="MF_00524"/>
    </source>
</evidence>
<keyword id="KW-0067">ATP-binding</keyword>
<keyword id="KW-0963">Cytoplasm</keyword>
<keyword id="KW-0324">Glycolysis</keyword>
<keyword id="KW-0418">Kinase</keyword>
<keyword id="KW-0547">Nucleotide-binding</keyword>
<keyword id="KW-0808">Transferase</keyword>
<proteinExistence type="inferred from homology"/>